<feature type="peptide" id="PRO_0000445127" description="Contryphan-Ar3" evidence="5">
    <location>
        <begin position="1"/>
        <end position="10"/>
    </location>
</feature>
<feature type="modified residue" description="4-carboxyglutamate; partial" evidence="8">
    <location>
        <position position="3"/>
    </location>
</feature>
<feature type="modified residue" description="D-tryptophan" evidence="8">
    <location>
        <position position="6"/>
    </location>
</feature>
<feature type="modified residue" description="Cysteine amide" evidence="5">
    <location>
        <position position="10"/>
    </location>
</feature>
<feature type="disulfide bond" evidence="5">
    <location>
        <begin position="4"/>
        <end position="10"/>
    </location>
</feature>
<feature type="unsure residue" description="QN OR EL" evidence="8">
    <location>
        <begin position="1"/>
        <end position="2"/>
    </location>
</feature>
<accession>P0DPQ0</accession>
<comment type="function">
    <text evidence="1 2 3 4">Its target is unknown, but this toxin may modulate voltage-activated calcium channels (Cav) or calcium-dependent potassium channels (KCa).</text>
</comment>
<comment type="subcellular location">
    <subcellularLocation>
        <location evidence="5">Secreted</location>
    </subcellularLocation>
</comment>
<comment type="tissue specificity">
    <text evidence="8">Expressed by the venom duct.</text>
</comment>
<comment type="domain">
    <text evidence="7">The cysteine framework is C-C.</text>
</comment>
<comment type="mass spectrometry" mass="1286.6" method="MALDI" evidence="5">
    <text>Monoisotopic mass, Ar1286.</text>
</comment>
<comment type="mass spectrometry" mass="1330.58" method="MALDI" evidence="5">
    <text>Monoisotopic mass, Ar1330 (gamma-carboxylated).</text>
</comment>
<comment type="similarity">
    <text evidence="7">Belongs to the O2 superfamily. Contryphan family.</text>
</comment>
<proteinExistence type="evidence at protein level"/>
<keyword id="KW-0027">Amidation</keyword>
<keyword id="KW-0208">D-amino acid</keyword>
<keyword id="KW-0903">Direct protein sequencing</keyword>
<keyword id="KW-1015">Disulfide bond</keyword>
<keyword id="KW-0301">Gamma-carboxyglutamic acid</keyword>
<keyword id="KW-0872">Ion channel impairing toxin</keyword>
<keyword id="KW-0528">Neurotoxin</keyword>
<keyword id="KW-0964">Secreted</keyword>
<keyword id="KW-0800">Toxin</keyword>
<protein>
    <recommendedName>
        <fullName evidence="7">Contryphan-Ar3</fullName>
    </recommendedName>
    <alternativeName>
        <fullName evidence="6">Ar1286</fullName>
    </alternativeName>
    <alternativeName>
        <fullName evidence="6">Ar1330</fullName>
    </alternativeName>
</protein>
<organism>
    <name type="scientific">Conus araneosus</name>
    <name type="common">Cobweb cone</name>
    <dbReference type="NCBI Taxonomy" id="101286"/>
    <lineage>
        <taxon>Eukaryota</taxon>
        <taxon>Metazoa</taxon>
        <taxon>Spiralia</taxon>
        <taxon>Lophotrochozoa</taxon>
        <taxon>Mollusca</taxon>
        <taxon>Gastropoda</taxon>
        <taxon>Caenogastropoda</taxon>
        <taxon>Neogastropoda</taxon>
        <taxon>Conoidea</taxon>
        <taxon>Conidae</taxon>
        <taxon>Conus</taxon>
    </lineage>
</organism>
<evidence type="ECO:0000250" key="1">
    <source>
        <dbReference type="UniProtKB" id="P0C248"/>
    </source>
</evidence>
<evidence type="ECO:0000250" key="2">
    <source>
        <dbReference type="UniProtKB" id="P0C250"/>
    </source>
</evidence>
<evidence type="ECO:0000250" key="3">
    <source>
        <dbReference type="UniProtKB" id="P62903"/>
    </source>
</evidence>
<evidence type="ECO:0000250" key="4">
    <source>
        <dbReference type="UniProtKB" id="P83047"/>
    </source>
</evidence>
<evidence type="ECO:0000269" key="5">
    <source>
    </source>
</evidence>
<evidence type="ECO:0000303" key="6">
    <source>
    </source>
</evidence>
<evidence type="ECO:0000305" key="7"/>
<evidence type="ECO:0000305" key="8">
    <source>
    </source>
</evidence>
<sequence length="10" mass="1290">QNECPWKPWC</sequence>
<reference key="1">
    <citation type="journal article" date="2017" name="J. Proteome Res.">
        <title>Contryphan genes and mature peptides in the venom of nine cone snail species by transcriptomic and mass spectrometric analysis.</title>
        <authorList>
            <person name="Vijayasarathy M."/>
            <person name="Basheer S.M."/>
            <person name="Franklin J.B."/>
            <person name="Balaram P."/>
        </authorList>
    </citation>
    <scope>PROTEIN SEQUENCE</scope>
    <scope>IDENTIFICATION BY MASS SPECTROMETRY</scope>
    <scope>MASS SPECTROMETRY</scope>
    <scope>SUBCELLULAR LOCATION</scope>
    <scope>DISULFIDE BOND</scope>
    <scope>D-AMINO ACID AT TRP-6</scope>
    <scope>AMIDATION AT CYS-10</scope>
    <scope>GAMMA-CARBOXYGLUTAMATION AT GLU-3</scope>
    <source>
        <tissue>Venom</tissue>
    </source>
</reference>
<dbReference type="GO" id="GO:0005576">
    <property type="term" value="C:extracellular region"/>
    <property type="evidence" value="ECO:0007669"/>
    <property type="project" value="UniProtKB-SubCell"/>
</dbReference>
<dbReference type="GO" id="GO:0099106">
    <property type="term" value="F:ion channel regulator activity"/>
    <property type="evidence" value="ECO:0007669"/>
    <property type="project" value="UniProtKB-KW"/>
</dbReference>
<dbReference type="GO" id="GO:0090729">
    <property type="term" value="F:toxin activity"/>
    <property type="evidence" value="ECO:0007669"/>
    <property type="project" value="UniProtKB-KW"/>
</dbReference>
<dbReference type="InterPro" id="IPR011062">
    <property type="entry name" value="Contryphan_CS"/>
</dbReference>
<dbReference type="PROSITE" id="PS60027">
    <property type="entry name" value="CONTRYPHAN"/>
    <property type="match status" value="1"/>
</dbReference>
<name>COW3_CONAO</name>